<keyword id="KW-0067">ATP-binding</keyword>
<keyword id="KW-0963">Cytoplasm</keyword>
<keyword id="KW-0418">Kinase</keyword>
<keyword id="KW-0547">Nucleotide-binding</keyword>
<keyword id="KW-0665">Pyrimidine biosynthesis</keyword>
<keyword id="KW-1185">Reference proteome</keyword>
<keyword id="KW-0808">Transferase</keyword>
<organism>
    <name type="scientific">Polaromonas naphthalenivorans (strain CJ2)</name>
    <dbReference type="NCBI Taxonomy" id="365044"/>
    <lineage>
        <taxon>Bacteria</taxon>
        <taxon>Pseudomonadati</taxon>
        <taxon>Pseudomonadota</taxon>
        <taxon>Betaproteobacteria</taxon>
        <taxon>Burkholderiales</taxon>
        <taxon>Comamonadaceae</taxon>
        <taxon>Polaromonas</taxon>
    </lineage>
</organism>
<gene>
    <name evidence="1" type="primary">pyrH</name>
    <name type="ordered locus">Pnap_1760</name>
</gene>
<accession>A1VN42</accession>
<protein>
    <recommendedName>
        <fullName evidence="1">Uridylate kinase</fullName>
        <shortName evidence="1">UK</shortName>
        <ecNumber evidence="1">2.7.4.22</ecNumber>
    </recommendedName>
    <alternativeName>
        <fullName evidence="1">Uridine monophosphate kinase</fullName>
        <shortName evidence="1">UMP kinase</shortName>
        <shortName evidence="1">UMPK</shortName>
    </alternativeName>
</protein>
<sequence length="236" mass="25180">MPAYKRILLKLSGEALMGDDAFGINRATIVRMVEEIAEVTRMGVQVAVVIGGGNIFRGVAGGSVGMDRATADYMGMLATVMNALALGDTMDKAGLVARVMSAIGIERVVEPYVRPKALQYLEEGKVVVFAAGTGNPFFTTDTAAALRGAEIGAEIVLKATKVDGVYSADPKKDPEATRYTSITFDEVIGKNLEVMDATAFALCRDQKLPIKIFSIFKLGALRRVVMGEDEGTLVHV</sequence>
<reference key="1">
    <citation type="journal article" date="2009" name="Environ. Microbiol.">
        <title>The genome of Polaromonas naphthalenivorans strain CJ2, isolated from coal tar-contaminated sediment, reveals physiological and metabolic versatility and evolution through extensive horizontal gene transfer.</title>
        <authorList>
            <person name="Yagi J.M."/>
            <person name="Sims D."/>
            <person name="Brettin T."/>
            <person name="Bruce D."/>
            <person name="Madsen E.L."/>
        </authorList>
    </citation>
    <scope>NUCLEOTIDE SEQUENCE [LARGE SCALE GENOMIC DNA]</scope>
    <source>
        <strain>CJ2</strain>
    </source>
</reference>
<evidence type="ECO:0000255" key="1">
    <source>
        <dbReference type="HAMAP-Rule" id="MF_01220"/>
    </source>
</evidence>
<feature type="chain" id="PRO_1000053975" description="Uridylate kinase">
    <location>
        <begin position="1"/>
        <end position="236"/>
    </location>
</feature>
<feature type="binding site" evidence="1">
    <location>
        <begin position="10"/>
        <end position="13"/>
    </location>
    <ligand>
        <name>ATP</name>
        <dbReference type="ChEBI" id="CHEBI:30616"/>
    </ligand>
</feature>
<feature type="binding site" evidence="1">
    <location>
        <position position="52"/>
    </location>
    <ligand>
        <name>UMP</name>
        <dbReference type="ChEBI" id="CHEBI:57865"/>
    </ligand>
</feature>
<feature type="binding site" evidence="1">
    <location>
        <position position="53"/>
    </location>
    <ligand>
        <name>ATP</name>
        <dbReference type="ChEBI" id="CHEBI:30616"/>
    </ligand>
</feature>
<feature type="binding site" evidence="1">
    <location>
        <position position="57"/>
    </location>
    <ligand>
        <name>ATP</name>
        <dbReference type="ChEBI" id="CHEBI:30616"/>
    </ligand>
</feature>
<feature type="binding site" evidence="1">
    <location>
        <position position="72"/>
    </location>
    <ligand>
        <name>UMP</name>
        <dbReference type="ChEBI" id="CHEBI:57865"/>
    </ligand>
</feature>
<feature type="binding site" evidence="1">
    <location>
        <begin position="133"/>
        <end position="140"/>
    </location>
    <ligand>
        <name>UMP</name>
        <dbReference type="ChEBI" id="CHEBI:57865"/>
    </ligand>
</feature>
<feature type="binding site" evidence="1">
    <location>
        <position position="160"/>
    </location>
    <ligand>
        <name>ATP</name>
        <dbReference type="ChEBI" id="CHEBI:30616"/>
    </ligand>
</feature>
<feature type="binding site" evidence="1">
    <location>
        <position position="166"/>
    </location>
    <ligand>
        <name>ATP</name>
        <dbReference type="ChEBI" id="CHEBI:30616"/>
    </ligand>
</feature>
<feature type="binding site" evidence="1">
    <location>
        <position position="169"/>
    </location>
    <ligand>
        <name>ATP</name>
        <dbReference type="ChEBI" id="CHEBI:30616"/>
    </ligand>
</feature>
<proteinExistence type="inferred from homology"/>
<name>PYRH_POLNA</name>
<dbReference type="EC" id="2.7.4.22" evidence="1"/>
<dbReference type="EMBL" id="CP000529">
    <property type="protein sequence ID" value="ABM37070.1"/>
    <property type="molecule type" value="Genomic_DNA"/>
</dbReference>
<dbReference type="RefSeq" id="WP_011801151.1">
    <property type="nucleotide sequence ID" value="NC_008781.1"/>
</dbReference>
<dbReference type="SMR" id="A1VN42"/>
<dbReference type="STRING" id="365044.Pnap_1760"/>
<dbReference type="KEGG" id="pna:Pnap_1760"/>
<dbReference type="eggNOG" id="COG0528">
    <property type="taxonomic scope" value="Bacteria"/>
</dbReference>
<dbReference type="HOGENOM" id="CLU_033861_0_0_4"/>
<dbReference type="OrthoDB" id="9807458at2"/>
<dbReference type="UniPathway" id="UPA00159">
    <property type="reaction ID" value="UER00275"/>
</dbReference>
<dbReference type="Proteomes" id="UP000000644">
    <property type="component" value="Chromosome"/>
</dbReference>
<dbReference type="GO" id="GO:0005829">
    <property type="term" value="C:cytosol"/>
    <property type="evidence" value="ECO:0007669"/>
    <property type="project" value="TreeGrafter"/>
</dbReference>
<dbReference type="GO" id="GO:0005524">
    <property type="term" value="F:ATP binding"/>
    <property type="evidence" value="ECO:0007669"/>
    <property type="project" value="UniProtKB-KW"/>
</dbReference>
<dbReference type="GO" id="GO:0033862">
    <property type="term" value="F:UMP kinase activity"/>
    <property type="evidence" value="ECO:0007669"/>
    <property type="project" value="UniProtKB-EC"/>
</dbReference>
<dbReference type="GO" id="GO:0044210">
    <property type="term" value="P:'de novo' CTP biosynthetic process"/>
    <property type="evidence" value="ECO:0007669"/>
    <property type="project" value="UniProtKB-UniRule"/>
</dbReference>
<dbReference type="GO" id="GO:0006225">
    <property type="term" value="P:UDP biosynthetic process"/>
    <property type="evidence" value="ECO:0007669"/>
    <property type="project" value="TreeGrafter"/>
</dbReference>
<dbReference type="CDD" id="cd04254">
    <property type="entry name" value="AAK_UMPK-PyrH-Ec"/>
    <property type="match status" value="1"/>
</dbReference>
<dbReference type="FunFam" id="3.40.1160.10:FF:000001">
    <property type="entry name" value="Uridylate kinase"/>
    <property type="match status" value="1"/>
</dbReference>
<dbReference type="Gene3D" id="3.40.1160.10">
    <property type="entry name" value="Acetylglutamate kinase-like"/>
    <property type="match status" value="1"/>
</dbReference>
<dbReference type="HAMAP" id="MF_01220_B">
    <property type="entry name" value="PyrH_B"/>
    <property type="match status" value="1"/>
</dbReference>
<dbReference type="InterPro" id="IPR036393">
    <property type="entry name" value="AceGlu_kinase-like_sf"/>
</dbReference>
<dbReference type="InterPro" id="IPR001048">
    <property type="entry name" value="Asp/Glu/Uridylate_kinase"/>
</dbReference>
<dbReference type="InterPro" id="IPR011817">
    <property type="entry name" value="Uridylate_kinase"/>
</dbReference>
<dbReference type="InterPro" id="IPR015963">
    <property type="entry name" value="Uridylate_kinase_bac"/>
</dbReference>
<dbReference type="NCBIfam" id="TIGR02075">
    <property type="entry name" value="pyrH_bact"/>
    <property type="match status" value="1"/>
</dbReference>
<dbReference type="PANTHER" id="PTHR42833">
    <property type="entry name" value="URIDYLATE KINASE"/>
    <property type="match status" value="1"/>
</dbReference>
<dbReference type="PANTHER" id="PTHR42833:SF4">
    <property type="entry name" value="URIDYLATE KINASE PUMPKIN, CHLOROPLASTIC"/>
    <property type="match status" value="1"/>
</dbReference>
<dbReference type="Pfam" id="PF00696">
    <property type="entry name" value="AA_kinase"/>
    <property type="match status" value="1"/>
</dbReference>
<dbReference type="PIRSF" id="PIRSF005650">
    <property type="entry name" value="Uridylate_kin"/>
    <property type="match status" value="1"/>
</dbReference>
<dbReference type="SUPFAM" id="SSF53633">
    <property type="entry name" value="Carbamate kinase-like"/>
    <property type="match status" value="1"/>
</dbReference>
<comment type="function">
    <text evidence="1">Catalyzes the reversible phosphorylation of UMP to UDP.</text>
</comment>
<comment type="catalytic activity">
    <reaction evidence="1">
        <text>UMP + ATP = UDP + ADP</text>
        <dbReference type="Rhea" id="RHEA:24400"/>
        <dbReference type="ChEBI" id="CHEBI:30616"/>
        <dbReference type="ChEBI" id="CHEBI:57865"/>
        <dbReference type="ChEBI" id="CHEBI:58223"/>
        <dbReference type="ChEBI" id="CHEBI:456216"/>
        <dbReference type="EC" id="2.7.4.22"/>
    </reaction>
</comment>
<comment type="activity regulation">
    <text evidence="1">Inhibited by UTP.</text>
</comment>
<comment type="pathway">
    <text evidence="1">Pyrimidine metabolism; CTP biosynthesis via de novo pathway; UDP from UMP (UMPK route): step 1/1.</text>
</comment>
<comment type="subunit">
    <text evidence="1">Homohexamer.</text>
</comment>
<comment type="subcellular location">
    <subcellularLocation>
        <location evidence="1">Cytoplasm</location>
    </subcellularLocation>
</comment>
<comment type="similarity">
    <text evidence="1">Belongs to the UMP kinase family.</text>
</comment>